<organism>
    <name type="scientific">Pseudomonas putida (strain GB-1)</name>
    <dbReference type="NCBI Taxonomy" id="76869"/>
    <lineage>
        <taxon>Bacteria</taxon>
        <taxon>Pseudomonadati</taxon>
        <taxon>Pseudomonadota</taxon>
        <taxon>Gammaproteobacteria</taxon>
        <taxon>Pseudomonadales</taxon>
        <taxon>Pseudomonadaceae</taxon>
        <taxon>Pseudomonas</taxon>
    </lineage>
</organism>
<protein>
    <recommendedName>
        <fullName evidence="1">Arginine--tRNA ligase</fullName>
        <ecNumber evidence="1">6.1.1.19</ecNumber>
    </recommendedName>
    <alternativeName>
        <fullName evidence="1">Arginyl-tRNA synthetase</fullName>
        <shortName evidence="1">ArgRS</shortName>
    </alternativeName>
</protein>
<gene>
    <name evidence="1" type="primary">argS</name>
    <name type="ordered locus">PputGB1_5139</name>
</gene>
<comment type="catalytic activity">
    <reaction evidence="1">
        <text>tRNA(Arg) + L-arginine + ATP = L-arginyl-tRNA(Arg) + AMP + diphosphate</text>
        <dbReference type="Rhea" id="RHEA:20301"/>
        <dbReference type="Rhea" id="RHEA-COMP:9658"/>
        <dbReference type="Rhea" id="RHEA-COMP:9673"/>
        <dbReference type="ChEBI" id="CHEBI:30616"/>
        <dbReference type="ChEBI" id="CHEBI:32682"/>
        <dbReference type="ChEBI" id="CHEBI:33019"/>
        <dbReference type="ChEBI" id="CHEBI:78442"/>
        <dbReference type="ChEBI" id="CHEBI:78513"/>
        <dbReference type="ChEBI" id="CHEBI:456215"/>
        <dbReference type="EC" id="6.1.1.19"/>
    </reaction>
</comment>
<comment type="subunit">
    <text evidence="1">Monomer.</text>
</comment>
<comment type="subcellular location">
    <subcellularLocation>
        <location evidence="1">Cytoplasm</location>
    </subcellularLocation>
</comment>
<comment type="similarity">
    <text evidence="1">Belongs to the class-I aminoacyl-tRNA synthetase family.</text>
</comment>
<reference key="1">
    <citation type="submission" date="2008-01" db="EMBL/GenBank/DDBJ databases">
        <title>Complete sequence of Pseudomonas putida GB-1.</title>
        <authorList>
            <consortium name="US DOE Joint Genome Institute"/>
            <person name="Copeland A."/>
            <person name="Lucas S."/>
            <person name="Lapidus A."/>
            <person name="Barry K."/>
            <person name="Glavina del Rio T."/>
            <person name="Dalin E."/>
            <person name="Tice H."/>
            <person name="Pitluck S."/>
            <person name="Bruce D."/>
            <person name="Goodwin L."/>
            <person name="Chertkov O."/>
            <person name="Brettin T."/>
            <person name="Detter J.C."/>
            <person name="Han C."/>
            <person name="Kuske C.R."/>
            <person name="Schmutz J."/>
            <person name="Larimer F."/>
            <person name="Land M."/>
            <person name="Hauser L."/>
            <person name="Kyrpides N."/>
            <person name="Kim E."/>
            <person name="McCarthy J.K."/>
            <person name="Richardson P."/>
        </authorList>
    </citation>
    <scope>NUCLEOTIDE SEQUENCE [LARGE SCALE GENOMIC DNA]</scope>
    <source>
        <strain>GB-1</strain>
    </source>
</reference>
<keyword id="KW-0030">Aminoacyl-tRNA synthetase</keyword>
<keyword id="KW-0067">ATP-binding</keyword>
<keyword id="KW-0963">Cytoplasm</keyword>
<keyword id="KW-0436">Ligase</keyword>
<keyword id="KW-0547">Nucleotide-binding</keyword>
<keyword id="KW-0648">Protein biosynthesis</keyword>
<name>SYR_PSEPG</name>
<dbReference type="EC" id="6.1.1.19" evidence="1"/>
<dbReference type="EMBL" id="CP000926">
    <property type="protein sequence ID" value="ABZ01024.1"/>
    <property type="molecule type" value="Genomic_DNA"/>
</dbReference>
<dbReference type="RefSeq" id="WP_012274641.1">
    <property type="nucleotide sequence ID" value="NC_010322.1"/>
</dbReference>
<dbReference type="SMR" id="B0KN43"/>
<dbReference type="KEGG" id="ppg:PputGB1_5139"/>
<dbReference type="eggNOG" id="COG0018">
    <property type="taxonomic scope" value="Bacteria"/>
</dbReference>
<dbReference type="HOGENOM" id="CLU_006406_5_1_6"/>
<dbReference type="Proteomes" id="UP000002157">
    <property type="component" value="Chromosome"/>
</dbReference>
<dbReference type="GO" id="GO:0005737">
    <property type="term" value="C:cytoplasm"/>
    <property type="evidence" value="ECO:0007669"/>
    <property type="project" value="UniProtKB-SubCell"/>
</dbReference>
<dbReference type="GO" id="GO:0004814">
    <property type="term" value="F:arginine-tRNA ligase activity"/>
    <property type="evidence" value="ECO:0007669"/>
    <property type="project" value="UniProtKB-UniRule"/>
</dbReference>
<dbReference type="GO" id="GO:0005524">
    <property type="term" value="F:ATP binding"/>
    <property type="evidence" value="ECO:0007669"/>
    <property type="project" value="UniProtKB-UniRule"/>
</dbReference>
<dbReference type="GO" id="GO:0006420">
    <property type="term" value="P:arginyl-tRNA aminoacylation"/>
    <property type="evidence" value="ECO:0007669"/>
    <property type="project" value="UniProtKB-UniRule"/>
</dbReference>
<dbReference type="CDD" id="cd00671">
    <property type="entry name" value="ArgRS_core"/>
    <property type="match status" value="1"/>
</dbReference>
<dbReference type="FunFam" id="3.30.1360.70:FF:000003">
    <property type="entry name" value="Arginine--tRNA ligase"/>
    <property type="match status" value="1"/>
</dbReference>
<dbReference type="FunFam" id="3.40.50.620:FF:000030">
    <property type="entry name" value="Arginine--tRNA ligase"/>
    <property type="match status" value="1"/>
</dbReference>
<dbReference type="FunFam" id="1.10.730.10:FF:000006">
    <property type="entry name" value="Arginyl-tRNA synthetase 2, mitochondrial"/>
    <property type="match status" value="1"/>
</dbReference>
<dbReference type="Gene3D" id="3.30.1360.70">
    <property type="entry name" value="Arginyl tRNA synthetase N-terminal domain"/>
    <property type="match status" value="1"/>
</dbReference>
<dbReference type="Gene3D" id="3.40.50.620">
    <property type="entry name" value="HUPs"/>
    <property type="match status" value="1"/>
</dbReference>
<dbReference type="Gene3D" id="1.10.730.10">
    <property type="entry name" value="Isoleucyl-tRNA Synthetase, Domain 1"/>
    <property type="match status" value="1"/>
</dbReference>
<dbReference type="HAMAP" id="MF_00123">
    <property type="entry name" value="Arg_tRNA_synth"/>
    <property type="match status" value="1"/>
</dbReference>
<dbReference type="InterPro" id="IPR001412">
    <property type="entry name" value="aa-tRNA-synth_I_CS"/>
</dbReference>
<dbReference type="InterPro" id="IPR001278">
    <property type="entry name" value="Arg-tRNA-ligase"/>
</dbReference>
<dbReference type="InterPro" id="IPR005148">
    <property type="entry name" value="Arg-tRNA-synth_N"/>
</dbReference>
<dbReference type="InterPro" id="IPR036695">
    <property type="entry name" value="Arg-tRNA-synth_N_sf"/>
</dbReference>
<dbReference type="InterPro" id="IPR035684">
    <property type="entry name" value="ArgRS_core"/>
</dbReference>
<dbReference type="InterPro" id="IPR008909">
    <property type="entry name" value="DALR_anticod-bd"/>
</dbReference>
<dbReference type="InterPro" id="IPR014729">
    <property type="entry name" value="Rossmann-like_a/b/a_fold"/>
</dbReference>
<dbReference type="InterPro" id="IPR009080">
    <property type="entry name" value="tRNAsynth_Ia_anticodon-bd"/>
</dbReference>
<dbReference type="NCBIfam" id="TIGR00456">
    <property type="entry name" value="argS"/>
    <property type="match status" value="1"/>
</dbReference>
<dbReference type="PANTHER" id="PTHR11956:SF5">
    <property type="entry name" value="ARGININE--TRNA LIGASE, CYTOPLASMIC"/>
    <property type="match status" value="1"/>
</dbReference>
<dbReference type="PANTHER" id="PTHR11956">
    <property type="entry name" value="ARGINYL-TRNA SYNTHETASE"/>
    <property type="match status" value="1"/>
</dbReference>
<dbReference type="Pfam" id="PF03485">
    <property type="entry name" value="Arg_tRNA_synt_N"/>
    <property type="match status" value="1"/>
</dbReference>
<dbReference type="Pfam" id="PF05746">
    <property type="entry name" value="DALR_1"/>
    <property type="match status" value="1"/>
</dbReference>
<dbReference type="Pfam" id="PF00750">
    <property type="entry name" value="tRNA-synt_1d"/>
    <property type="match status" value="1"/>
</dbReference>
<dbReference type="PRINTS" id="PR01038">
    <property type="entry name" value="TRNASYNTHARG"/>
</dbReference>
<dbReference type="SMART" id="SM01016">
    <property type="entry name" value="Arg_tRNA_synt_N"/>
    <property type="match status" value="1"/>
</dbReference>
<dbReference type="SMART" id="SM00836">
    <property type="entry name" value="DALR_1"/>
    <property type="match status" value="1"/>
</dbReference>
<dbReference type="SUPFAM" id="SSF47323">
    <property type="entry name" value="Anticodon-binding domain of a subclass of class I aminoacyl-tRNA synthetases"/>
    <property type="match status" value="1"/>
</dbReference>
<dbReference type="SUPFAM" id="SSF55190">
    <property type="entry name" value="Arginyl-tRNA synthetase (ArgRS), N-terminal 'additional' domain"/>
    <property type="match status" value="1"/>
</dbReference>
<dbReference type="SUPFAM" id="SSF52374">
    <property type="entry name" value="Nucleotidylyl transferase"/>
    <property type="match status" value="1"/>
</dbReference>
<dbReference type="PROSITE" id="PS00178">
    <property type="entry name" value="AA_TRNA_LIGASE_I"/>
    <property type="match status" value="1"/>
</dbReference>
<sequence length="578" mass="63776">MKDTIRQLIQQALTQLVNDGVLPEGLSPAIQVENARDKTHGDFASNIAMMLAKPAGMKPRDLAEKLINALPASADISKVEIAGPGFLNFFQNTDALANRLDAALADARLGVRKAGPSEKVVIDMSAPNLAKEMHVGHLRSTIIGDSVARVLEFLGDNVIRQNHVGDWGTQFGMLMAYLQENPITSDELSDLENFYRAAKKRFDESEEFATRARGLVVKLQAGDPECLALWTRFKDISLSHCQKTYELLNVKLTMADVMGESAYNDDLANVVADLKAKGLLVESQGAQCVFLEEFKNSEGEPLPVIVQKADGGYLYATTDLAAVRYRSNVLNADRALYFVDQRQALHFNQVFEVARRAGFVGHPMQMEHMGFGTMNGADGRPFKTRDGGTVKLIDLLTEAKERAYALVKEKNPSLTEAELRHIGEVVGIGAVKYADLSKHRTSDYSFNFELMLNFEGNTAPYLLYAYTRVAGVFRKLGKGFDEVEGNIVLQAAHEQDLAARLAQFGEILNNVADKGTPHVLCSYLYDLAGLFSSFYENCPILAAETLEQQQSRLRLAALTGRTLKQGLELLGLETLERM</sequence>
<accession>B0KN43</accession>
<feature type="chain" id="PRO_1000076224" description="Arginine--tRNA ligase">
    <location>
        <begin position="1"/>
        <end position="578"/>
    </location>
</feature>
<feature type="short sequence motif" description="'HIGH' region">
    <location>
        <begin position="127"/>
        <end position="137"/>
    </location>
</feature>
<evidence type="ECO:0000255" key="1">
    <source>
        <dbReference type="HAMAP-Rule" id="MF_00123"/>
    </source>
</evidence>
<proteinExistence type="inferred from homology"/>